<protein>
    <recommendedName>
        <fullName>DNA-directed RNA polymerase II subunit RPB7</fullName>
        <shortName>RNA polymerase II subunit B7</shortName>
    </recommendedName>
    <alternativeName>
        <fullName>DNA-directed RNA polymerase II subunit G</fullName>
    </alternativeName>
</protein>
<proteinExistence type="evidence at transcript level"/>
<name>RPB7_RAT</name>
<evidence type="ECO:0000250" key="1">
    <source>
        <dbReference type="UniProtKB" id="P34087"/>
    </source>
</evidence>
<evidence type="ECO:0000250" key="2">
    <source>
        <dbReference type="UniProtKB" id="P62487"/>
    </source>
</evidence>
<evidence type="ECO:0000305" key="3"/>
<reference key="1">
    <citation type="submission" date="1996-06" db="EMBL/GenBank/DDBJ databases">
        <authorList>
            <person name="Gillen C."/>
            <person name="Gleichmann M."/>
            <person name="Mueller H."/>
        </authorList>
    </citation>
    <scope>NUCLEOTIDE SEQUENCE [MRNA]</scope>
    <source>
        <strain>Wistar</strain>
        <tissue>Sciatic nerve</tissue>
    </source>
</reference>
<reference key="2">
    <citation type="journal article" date="2004" name="Genome Res.">
        <title>The status, quality, and expansion of the NIH full-length cDNA project: the Mammalian Gene Collection (MGC).</title>
        <authorList>
            <consortium name="The MGC Project Team"/>
        </authorList>
    </citation>
    <scope>NUCLEOTIDE SEQUENCE [LARGE SCALE MRNA]</scope>
    <source>
        <tissue>Pituitary</tissue>
    </source>
</reference>
<feature type="chain" id="PRO_0000073988" description="DNA-directed RNA polymerase II subunit RPB7">
    <location>
        <begin position="1"/>
        <end position="172"/>
    </location>
</feature>
<comment type="function">
    <text evidence="1 2">Core component of RNA polymerase II (Pol II), a DNA-dependent RNA polymerase which synthesizes mRNA precursors and many functional non-coding RNAs using the four ribonucleoside triphosphates as substrates. Pol II is the central component of the basal RNA polymerase II transcription machinery. It is composed of mobile elements that move relative to each other. POLR2G/RPB7 is part of a subcomplex with POLR2D/RPB4 that binds to a pocket formed by POLR2A/RPB1, POLR2B/RPB2 and POLR2F/RPABC2 at the base of the clamp element. The POLR2D/RPB4-POLR2G/RPB7 subcomplex seems to lock the clamp via POLR2G/RPB7 in the closed conformation thus preventing double-stranded DNA to enter the active site cleft. The POLR2D/RPB4-POLR2G/RPB7 subcomplex binds single-stranded DNA and RNA.</text>
</comment>
<comment type="subunit">
    <text evidence="2">Component of the RNA polymerase II (Pol II) core complex consisting of 12 subunits: a ten-subunit catalytic core composed of POLR2A/RPB1, POLR2B/RPB2, POLR2C/RPB3, POLR2I/RPB9, POLR2J/RPB11, POLR2E/RPABC1, POLR2F/RPABC2, POLR2H/RPABC3, POLR2K/RPABC4 and POLR2L/RPABC5 and a mobile stalk composed of two subunits POLR2D/RPB4 and POLR2G/RPB7, protruding from the core and functioning primarily in transcription initiation. Part of Pol II(G) complex, in which Pol II core associates with an additional subunit POLR2M; unlike conventional Pol II, Pol II(G) functions as a transcriptional repressor. Part of TBP-based Pol II pre-initiation complex (PIC), in which Pol II core assembles with general transcription factors and other specific initiation factors including GTF2E1, GTF2E2, GTF2F1, GTF2F2, TCEA1, ERCC2, ERCC3, GTF2H2, GTF2H3, GTF2H4, GTF2H5, GTF2A1, GTF2A2, GTF2B and TBP; this large multi-subunit PIC complex mediates DNA unwinding and targets Pol II core to the transcription start site where the first phosphodiester bond forms.</text>
</comment>
<comment type="subcellular location">
    <subcellularLocation>
        <location evidence="2">Nucleus</location>
    </subcellularLocation>
</comment>
<comment type="similarity">
    <text evidence="3">Belongs to the eukaryotic RPB7/RPC8 RNA polymerase subunit family.</text>
</comment>
<gene>
    <name type="primary">Polr2g</name>
</gene>
<dbReference type="EMBL" id="Z71925">
    <property type="protein sequence ID" value="CAA96468.1"/>
    <property type="molecule type" value="mRNA"/>
</dbReference>
<dbReference type="EMBL" id="BC060550">
    <property type="protein sequence ID" value="AAH60550.1"/>
    <property type="molecule type" value="mRNA"/>
</dbReference>
<dbReference type="EMBL" id="BC060595">
    <property type="protein sequence ID" value="AAH60595.1"/>
    <property type="molecule type" value="mRNA"/>
</dbReference>
<dbReference type="RefSeq" id="NP_446400.1">
    <property type="nucleotide sequence ID" value="NM_053948.4"/>
</dbReference>
<dbReference type="RefSeq" id="XP_006231035.1">
    <property type="nucleotide sequence ID" value="XM_006230973.1"/>
</dbReference>
<dbReference type="RefSeq" id="XP_063122446.1">
    <property type="nucleotide sequence ID" value="XM_063266376.1"/>
</dbReference>
<dbReference type="RefSeq" id="XP_063122459.1">
    <property type="nucleotide sequence ID" value="XM_063266389.1"/>
</dbReference>
<dbReference type="RefSeq" id="XP_063122474.1">
    <property type="nucleotide sequence ID" value="XM_063266404.1"/>
</dbReference>
<dbReference type="SMR" id="P62489"/>
<dbReference type="BioGRID" id="250618">
    <property type="interactions" value="1"/>
</dbReference>
<dbReference type="FunCoup" id="P62489">
    <property type="interactions" value="2599"/>
</dbReference>
<dbReference type="STRING" id="10116.ENSRNOP00000026313"/>
<dbReference type="PhosphoSitePlus" id="P62489"/>
<dbReference type="jPOST" id="P62489"/>
<dbReference type="PaxDb" id="10116-ENSRNOP00000026313"/>
<dbReference type="Ensembl" id="ENSRNOT00000026313.8">
    <property type="protein sequence ID" value="ENSRNOP00000026313.5"/>
    <property type="gene ID" value="ENSRNOG00000019439.8"/>
</dbReference>
<dbReference type="GeneID" id="117017"/>
<dbReference type="KEGG" id="rno:117017"/>
<dbReference type="UCSC" id="RGD:621284">
    <property type="organism name" value="rat"/>
</dbReference>
<dbReference type="AGR" id="RGD:621284"/>
<dbReference type="CTD" id="5436"/>
<dbReference type="RGD" id="621284">
    <property type="gene designation" value="Polr2g"/>
</dbReference>
<dbReference type="eggNOG" id="KOG3298">
    <property type="taxonomic scope" value="Eukaryota"/>
</dbReference>
<dbReference type="GeneTree" id="ENSGT00390000008975"/>
<dbReference type="HOGENOM" id="CLU_085878_2_0_1"/>
<dbReference type="InParanoid" id="P62489"/>
<dbReference type="OrthoDB" id="18885at9989"/>
<dbReference type="PhylomeDB" id="P62489"/>
<dbReference type="TreeFam" id="TF103042"/>
<dbReference type="Reactome" id="R-RNO-112382">
    <property type="pathway name" value="Formation of RNA Pol II elongation complex"/>
</dbReference>
<dbReference type="Reactome" id="R-RNO-113418">
    <property type="pathway name" value="Formation of the Early Elongation Complex"/>
</dbReference>
<dbReference type="Reactome" id="R-RNO-5578749">
    <property type="pathway name" value="Transcriptional regulation by small RNAs"/>
</dbReference>
<dbReference type="Reactome" id="R-RNO-674695">
    <property type="pathway name" value="RNA Polymerase II Pre-transcription Events"/>
</dbReference>
<dbReference type="Reactome" id="R-RNO-6781823">
    <property type="pathway name" value="Formation of TC-NER Pre-Incision Complex"/>
</dbReference>
<dbReference type="Reactome" id="R-RNO-6782135">
    <property type="pathway name" value="Dual incision in TC-NER"/>
</dbReference>
<dbReference type="Reactome" id="R-RNO-6782210">
    <property type="pathway name" value="Gap-filling DNA repair synthesis and ligation in TC-NER"/>
</dbReference>
<dbReference type="Reactome" id="R-RNO-6796648">
    <property type="pathway name" value="TP53 Regulates Transcription of DNA Repair Genes"/>
</dbReference>
<dbReference type="Reactome" id="R-RNO-6803529">
    <property type="pathway name" value="FGFR2 alternative splicing"/>
</dbReference>
<dbReference type="Reactome" id="R-RNO-6807505">
    <property type="pathway name" value="RNA polymerase II transcribes snRNA genes"/>
</dbReference>
<dbReference type="Reactome" id="R-RNO-72086">
    <property type="pathway name" value="mRNA Capping"/>
</dbReference>
<dbReference type="Reactome" id="R-RNO-72163">
    <property type="pathway name" value="mRNA Splicing - Major Pathway"/>
</dbReference>
<dbReference type="Reactome" id="R-RNO-72165">
    <property type="pathway name" value="mRNA Splicing - Minor Pathway"/>
</dbReference>
<dbReference type="Reactome" id="R-RNO-72203">
    <property type="pathway name" value="Processing of Capped Intron-Containing Pre-mRNA"/>
</dbReference>
<dbReference type="Reactome" id="R-RNO-73776">
    <property type="pathway name" value="RNA Polymerase II Promoter Escape"/>
</dbReference>
<dbReference type="Reactome" id="R-RNO-73779">
    <property type="pathway name" value="RNA Polymerase II Transcription Pre-Initiation And Promoter Opening"/>
</dbReference>
<dbReference type="Reactome" id="R-RNO-75953">
    <property type="pathway name" value="RNA Polymerase II Transcription Initiation"/>
</dbReference>
<dbReference type="Reactome" id="R-RNO-75955">
    <property type="pathway name" value="RNA Polymerase II Transcription Elongation"/>
</dbReference>
<dbReference type="Reactome" id="R-RNO-76042">
    <property type="pathway name" value="RNA Polymerase II Transcription Initiation And Promoter Clearance"/>
</dbReference>
<dbReference type="Reactome" id="R-RNO-77075">
    <property type="pathway name" value="RNA Pol II CTD phosphorylation and interaction with CE"/>
</dbReference>
<dbReference type="Reactome" id="R-RNO-9018519">
    <property type="pathway name" value="Estrogen-dependent gene expression"/>
</dbReference>
<dbReference type="PRO" id="PR:P62489"/>
<dbReference type="Proteomes" id="UP000002494">
    <property type="component" value="Chromosome 1"/>
</dbReference>
<dbReference type="Bgee" id="ENSRNOG00000019439">
    <property type="expression patterns" value="Expressed in thymus and 20 other cell types or tissues"/>
</dbReference>
<dbReference type="GO" id="GO:0005634">
    <property type="term" value="C:nucleus"/>
    <property type="evidence" value="ECO:0000250"/>
    <property type="project" value="UniProtKB"/>
</dbReference>
<dbReference type="GO" id="GO:0000932">
    <property type="term" value="C:P-body"/>
    <property type="evidence" value="ECO:0000318"/>
    <property type="project" value="GO_Central"/>
</dbReference>
<dbReference type="GO" id="GO:0005665">
    <property type="term" value="C:RNA polymerase II, core complex"/>
    <property type="evidence" value="ECO:0000250"/>
    <property type="project" value="UniProtKB"/>
</dbReference>
<dbReference type="GO" id="GO:0003697">
    <property type="term" value="F:single-stranded DNA binding"/>
    <property type="evidence" value="ECO:0000318"/>
    <property type="project" value="GO_Central"/>
</dbReference>
<dbReference type="GO" id="GO:0003727">
    <property type="term" value="F:single-stranded RNA binding"/>
    <property type="evidence" value="ECO:0000318"/>
    <property type="project" value="GO_Central"/>
</dbReference>
<dbReference type="GO" id="GO:0031369">
    <property type="term" value="F:translation initiation factor binding"/>
    <property type="evidence" value="ECO:0000318"/>
    <property type="project" value="GO_Central"/>
</dbReference>
<dbReference type="GO" id="GO:0000956">
    <property type="term" value="P:nuclear-transcribed mRNA catabolic process"/>
    <property type="evidence" value="ECO:0000318"/>
    <property type="project" value="GO_Central"/>
</dbReference>
<dbReference type="GO" id="GO:0060213">
    <property type="term" value="P:positive regulation of nuclear-transcribed mRNA poly(A) tail shortening"/>
    <property type="evidence" value="ECO:0000318"/>
    <property type="project" value="GO_Central"/>
</dbReference>
<dbReference type="GO" id="GO:0045948">
    <property type="term" value="P:positive regulation of translational initiation"/>
    <property type="evidence" value="ECO:0000318"/>
    <property type="project" value="GO_Central"/>
</dbReference>
<dbReference type="GO" id="GO:0006366">
    <property type="term" value="P:transcription by RNA polymerase II"/>
    <property type="evidence" value="ECO:0000250"/>
    <property type="project" value="UniProtKB"/>
</dbReference>
<dbReference type="GO" id="GO:0006367">
    <property type="term" value="P:transcription initiation at RNA polymerase II promoter"/>
    <property type="evidence" value="ECO:0000318"/>
    <property type="project" value="GO_Central"/>
</dbReference>
<dbReference type="CDD" id="cd04329">
    <property type="entry name" value="RNAP_II_Rpb7_N"/>
    <property type="match status" value="1"/>
</dbReference>
<dbReference type="CDD" id="cd04462">
    <property type="entry name" value="S1_RNAPII_Rpb7"/>
    <property type="match status" value="1"/>
</dbReference>
<dbReference type="FunFam" id="2.40.50.140:FF:000043">
    <property type="entry name" value="DNA-directed RNA polymerase II subunit RPB7"/>
    <property type="match status" value="1"/>
</dbReference>
<dbReference type="FunFam" id="3.30.1490.120:FF:000001">
    <property type="entry name" value="DNA-directed RNA polymerase II subunit RPB7"/>
    <property type="match status" value="1"/>
</dbReference>
<dbReference type="Gene3D" id="2.40.50.140">
    <property type="entry name" value="Nucleic acid-binding proteins"/>
    <property type="match status" value="1"/>
</dbReference>
<dbReference type="Gene3D" id="3.30.1490.120">
    <property type="entry name" value="RNA polymerase Rpb7-like, N-terminal domain"/>
    <property type="match status" value="1"/>
</dbReference>
<dbReference type="InterPro" id="IPR012340">
    <property type="entry name" value="NA-bd_OB-fold"/>
</dbReference>
<dbReference type="InterPro" id="IPR036898">
    <property type="entry name" value="RNA_pol_Rpb7-like_N_sf"/>
</dbReference>
<dbReference type="InterPro" id="IPR045113">
    <property type="entry name" value="Rpb7-like"/>
</dbReference>
<dbReference type="InterPro" id="IPR005576">
    <property type="entry name" value="Rpb7-like_N"/>
</dbReference>
<dbReference type="InterPro" id="IPR003029">
    <property type="entry name" value="S1_domain"/>
</dbReference>
<dbReference type="PANTHER" id="PTHR12709:SF4">
    <property type="entry name" value="DNA-DIRECTED RNA POLYMERASE II SUBUNIT RPB7"/>
    <property type="match status" value="1"/>
</dbReference>
<dbReference type="PANTHER" id="PTHR12709">
    <property type="entry name" value="DNA-DIRECTED RNA POLYMERASE II, III"/>
    <property type="match status" value="1"/>
</dbReference>
<dbReference type="Pfam" id="PF00575">
    <property type="entry name" value="S1"/>
    <property type="match status" value="1"/>
</dbReference>
<dbReference type="Pfam" id="PF03876">
    <property type="entry name" value="SHS2_Rpb7-N"/>
    <property type="match status" value="1"/>
</dbReference>
<dbReference type="SMART" id="SM00316">
    <property type="entry name" value="S1"/>
    <property type="match status" value="1"/>
</dbReference>
<dbReference type="SUPFAM" id="SSF88798">
    <property type="entry name" value="N-terminal, heterodimerisation domain of RBP7 (RpoE)"/>
    <property type="match status" value="1"/>
</dbReference>
<dbReference type="SUPFAM" id="SSF50249">
    <property type="entry name" value="Nucleic acid-binding proteins"/>
    <property type="match status" value="1"/>
</dbReference>
<accession>P62489</accession>
<accession>P52433</accession>
<sequence>MFYHISLEHEILLHPRYFGPNLLNTVKQKLFTEVEGTCTGKYGFVIAVTTIDNIGAGVIQPGRGFVLYPVKYKAIVFRPFKGEVVDAVVTQVNKVGLFTEIGPMSCFISRHSIPSEMEFDPNSNPPCYKTMDEDIVIQQDDEIRLKIVGTRVDKNDIFAIGSLMDDYLGLVS</sequence>
<keyword id="KW-0240">DNA-directed RNA polymerase</keyword>
<keyword id="KW-0539">Nucleus</keyword>
<keyword id="KW-1185">Reference proteome</keyword>
<keyword id="KW-0694">RNA-binding</keyword>
<keyword id="KW-0804">Transcription</keyword>
<organism>
    <name type="scientific">Rattus norvegicus</name>
    <name type="common">Rat</name>
    <dbReference type="NCBI Taxonomy" id="10116"/>
    <lineage>
        <taxon>Eukaryota</taxon>
        <taxon>Metazoa</taxon>
        <taxon>Chordata</taxon>
        <taxon>Craniata</taxon>
        <taxon>Vertebrata</taxon>
        <taxon>Euteleostomi</taxon>
        <taxon>Mammalia</taxon>
        <taxon>Eutheria</taxon>
        <taxon>Euarchontoglires</taxon>
        <taxon>Glires</taxon>
        <taxon>Rodentia</taxon>
        <taxon>Myomorpha</taxon>
        <taxon>Muroidea</taxon>
        <taxon>Muridae</taxon>
        <taxon>Murinae</taxon>
        <taxon>Rattus</taxon>
    </lineage>
</organism>